<name>MOGR_LISMO</name>
<comment type="function">
    <text evidence="1 2">Transcriptional repressor of flagellar motility genes, such as flaA, during extracellular growth at 37 degrees Celsius and during intracellular infection. Binds directly to the gene promoter region and probably prevents RNA polymerase binding. At low temperatures, MogR repression activity is modulated by the DegU response regulator in an unknown mechanism. Required for full virulence.</text>
</comment>
<comment type="subcellular location">
    <subcellularLocation>
        <location evidence="1">Cytoplasm</location>
    </subcellularLocation>
</comment>
<dbReference type="EMBL" id="AL591976">
    <property type="protein sequence ID" value="CAC98752.1"/>
    <property type="molecule type" value="Genomic_DNA"/>
</dbReference>
<dbReference type="PIR" id="AB1159">
    <property type="entry name" value="AB1159"/>
</dbReference>
<dbReference type="RefSeq" id="NP_464201.1">
    <property type="nucleotide sequence ID" value="NC_003210.1"/>
</dbReference>
<dbReference type="RefSeq" id="WP_003721794.1">
    <property type="nucleotide sequence ID" value="NZ_CP149495.1"/>
</dbReference>
<dbReference type="PDB" id="3FDQ">
    <property type="method" value="X-ray"/>
    <property type="resolution" value="1.75 A"/>
    <property type="chains" value="A/B=1-162"/>
</dbReference>
<dbReference type="PDB" id="7X9S">
    <property type="method" value="X-ray"/>
    <property type="resolution" value="3.11 A"/>
    <property type="chains" value="B/D/F=1-162"/>
</dbReference>
<dbReference type="PDBsum" id="3FDQ"/>
<dbReference type="PDBsum" id="7X9S"/>
<dbReference type="SMR" id="P0DJO8"/>
<dbReference type="STRING" id="169963.gene:17593325"/>
<dbReference type="PaxDb" id="169963-lmo0674"/>
<dbReference type="EnsemblBacteria" id="CAC98752">
    <property type="protein sequence ID" value="CAC98752"/>
    <property type="gene ID" value="CAC98752"/>
</dbReference>
<dbReference type="GeneID" id="985015"/>
<dbReference type="KEGG" id="lmo:lmo0674"/>
<dbReference type="PATRIC" id="fig|169963.11.peg.695"/>
<dbReference type="eggNOG" id="ENOG50340G0">
    <property type="taxonomic scope" value="Bacteria"/>
</dbReference>
<dbReference type="HOGENOM" id="CLU_080650_0_0_9"/>
<dbReference type="OrthoDB" id="2364120at2"/>
<dbReference type="BioCyc" id="LMON169963:LMO0674-MONOMER"/>
<dbReference type="EvolutionaryTrace" id="P0DJO8"/>
<dbReference type="Proteomes" id="UP000000817">
    <property type="component" value="Chromosome"/>
</dbReference>
<dbReference type="CollecTF" id="EXPREG_000008d0"/>
<dbReference type="GO" id="GO:0005737">
    <property type="term" value="C:cytoplasm"/>
    <property type="evidence" value="ECO:0007669"/>
    <property type="project" value="UniProtKB-SubCell"/>
</dbReference>
<dbReference type="GO" id="GO:0032993">
    <property type="term" value="C:protein-DNA complex"/>
    <property type="evidence" value="ECO:0000315"/>
    <property type="project" value="CollecTF"/>
</dbReference>
<dbReference type="GO" id="GO:0001217">
    <property type="term" value="F:DNA-binding transcription repressor activity"/>
    <property type="evidence" value="ECO:0000315"/>
    <property type="project" value="CollecTF"/>
</dbReference>
<dbReference type="GO" id="GO:0000976">
    <property type="term" value="F:transcription cis-regulatory region binding"/>
    <property type="evidence" value="ECO:0000315"/>
    <property type="project" value="CollecTF"/>
</dbReference>
<dbReference type="GO" id="GO:0045892">
    <property type="term" value="P:negative regulation of DNA-templated transcription"/>
    <property type="evidence" value="ECO:0000314"/>
    <property type="project" value="CollecTF"/>
</dbReference>
<dbReference type="FunFam" id="1.20.120.1030:FF:000001">
    <property type="entry name" value="Motility gene repressor MogR"/>
    <property type="match status" value="1"/>
</dbReference>
<dbReference type="Gene3D" id="1.20.120.1030">
    <property type="entry name" value="Motility repressor MogR, DNA-binding domain"/>
    <property type="match status" value="1"/>
</dbReference>
<dbReference type="InterPro" id="IPR021009">
    <property type="entry name" value="MogR_DNA-bd"/>
</dbReference>
<dbReference type="InterPro" id="IPR038245">
    <property type="entry name" value="MogR_DNA-bd_sf"/>
</dbReference>
<dbReference type="Pfam" id="PF12181">
    <property type="entry name" value="MogR_DNAbind"/>
    <property type="match status" value="1"/>
</dbReference>
<proteinExistence type="evidence at protein level"/>
<protein>
    <recommendedName>
        <fullName>Motility gene repressor MogR</fullName>
    </recommendedName>
</protein>
<reference key="1">
    <citation type="journal article" date="2004" name="Proc. Natl. Acad. Sci. U.S.A.">
        <title>Listeria monocytogenes regulates flagellar motility gene expression through MogR, a transcriptional repressor required for virulence.</title>
        <authorList>
            <person name="Gruendling A."/>
            <person name="Burrack L.S."/>
            <person name="Bouwer H.G.A."/>
            <person name="Higgins D.E."/>
        </authorList>
    </citation>
    <scope>NUCLEOTIDE SEQUENCE [GENOMIC DNA]</scope>
    <scope>FUNCTION</scope>
    <scope>SUBCELLULAR LOCATION</scope>
    <source>
        <strain>ATCC BAA-679 / EGD-e</strain>
    </source>
</reference>
<reference key="2">
    <citation type="journal article" date="2001" name="Science">
        <title>Comparative genomics of Listeria species.</title>
        <authorList>
            <person name="Glaser P."/>
            <person name="Frangeul L."/>
            <person name="Buchrieser C."/>
            <person name="Rusniok C."/>
            <person name="Amend A."/>
            <person name="Baquero F."/>
            <person name="Berche P."/>
            <person name="Bloecker H."/>
            <person name="Brandt P."/>
            <person name="Chakraborty T."/>
            <person name="Charbit A."/>
            <person name="Chetouani F."/>
            <person name="Couve E."/>
            <person name="de Daruvar A."/>
            <person name="Dehoux P."/>
            <person name="Domann E."/>
            <person name="Dominguez-Bernal G."/>
            <person name="Duchaud E."/>
            <person name="Durant L."/>
            <person name="Dussurget O."/>
            <person name="Entian K.-D."/>
            <person name="Fsihi H."/>
            <person name="Garcia-del Portillo F."/>
            <person name="Garrido P."/>
            <person name="Gautier L."/>
            <person name="Goebel W."/>
            <person name="Gomez-Lopez N."/>
            <person name="Hain T."/>
            <person name="Hauf J."/>
            <person name="Jackson D."/>
            <person name="Jones L.-M."/>
            <person name="Kaerst U."/>
            <person name="Kreft J."/>
            <person name="Kuhn M."/>
            <person name="Kunst F."/>
            <person name="Kurapkat G."/>
            <person name="Madueno E."/>
            <person name="Maitournam A."/>
            <person name="Mata Vicente J."/>
            <person name="Ng E."/>
            <person name="Nedjari H."/>
            <person name="Nordsiek G."/>
            <person name="Novella S."/>
            <person name="de Pablos B."/>
            <person name="Perez-Diaz J.-C."/>
            <person name="Purcell R."/>
            <person name="Remmel B."/>
            <person name="Rose M."/>
            <person name="Schlueter T."/>
            <person name="Simoes N."/>
            <person name="Tierrez A."/>
            <person name="Vazquez-Boland J.-A."/>
            <person name="Voss H."/>
            <person name="Wehland J."/>
            <person name="Cossart P."/>
        </authorList>
    </citation>
    <scope>NUCLEOTIDE SEQUENCE [LARGE SCALE GENOMIC DNA]</scope>
    <source>
        <strain>ATCC BAA-679 / EGD-e</strain>
    </source>
</reference>
<reference key="3">
    <citation type="journal article" date="2006" name="PLoS Pathog.">
        <title>The MogR transcriptional repressor regulates nonhierarchal expression of flagellar motility genes and virulence in Listeria monocytogenes.</title>
        <authorList>
            <person name="Shen A."/>
            <person name="Higgins D.E."/>
        </authorList>
    </citation>
    <scope>FUNCTION</scope>
    <source>
        <strain>ATCC BAA-679 / EGD-e</strain>
    </source>
</reference>
<accession>P0DJO8</accession>
<accession>Q8Y960</accession>
<feature type="chain" id="PRO_0000247906" description="Motility gene repressor MogR">
    <location>
        <begin position="1"/>
        <end position="306"/>
    </location>
</feature>
<feature type="helix" evidence="3">
    <location>
        <begin position="6"/>
        <end position="18"/>
    </location>
</feature>
<feature type="helix" evidence="3">
    <location>
        <begin position="24"/>
        <end position="35"/>
    </location>
</feature>
<feature type="helix" evidence="3">
    <location>
        <begin position="39"/>
        <end position="58"/>
    </location>
</feature>
<feature type="helix" evidence="3">
    <location>
        <begin position="62"/>
        <end position="66"/>
    </location>
</feature>
<feature type="strand" evidence="3">
    <location>
        <begin position="68"/>
        <end position="72"/>
    </location>
</feature>
<feature type="helix" evidence="3">
    <location>
        <begin position="74"/>
        <end position="89"/>
    </location>
</feature>
<feature type="helix" evidence="3">
    <location>
        <begin position="94"/>
        <end position="101"/>
    </location>
</feature>
<feature type="turn" evidence="3">
    <location>
        <begin position="103"/>
        <end position="106"/>
    </location>
</feature>
<feature type="strand" evidence="3">
    <location>
        <begin position="108"/>
        <end position="111"/>
    </location>
</feature>
<feature type="helix" evidence="3">
    <location>
        <begin position="113"/>
        <end position="124"/>
    </location>
</feature>
<feature type="strand" evidence="4">
    <location>
        <begin position="155"/>
        <end position="157"/>
    </location>
</feature>
<keyword id="KW-0002">3D-structure</keyword>
<keyword id="KW-0963">Cytoplasm</keyword>
<keyword id="KW-0238">DNA-binding</keyword>
<keyword id="KW-1185">Reference proteome</keyword>
<keyword id="KW-0678">Repressor</keyword>
<keyword id="KW-0804">Transcription</keyword>
<keyword id="KW-0805">Transcription regulation</keyword>
<keyword id="KW-0843">Virulence</keyword>
<sequence length="306" mass="35254">MPKSEIRKLLQEIKKQVDNPGNSSTTEIKKMASEAGIDEQTAEEIYHLLTEFYQAVEEHGGIEKYMHSNISWLKIELELLSACYQIAILEDMKVLDISEMLSLNDLRIFPKTPSQLQNTYYKLKKELIQVEDIPKNKPGRKRKTQKNTKKEKTNIFGKVVPAEFKAPASIKEQISYDKSREKNLVDLLSGVKSNVQLLSENQGEENNVYDLLKSIYSLSSLAVQKEELDKKYQDLQTKCQELEQENSYLKQQNETMTDSFHTLVLQVADFAYASDLDQIQALPLFSQQLVVTLNQLGVFKENYKQM</sequence>
<evidence type="ECO:0000269" key="1">
    <source>
    </source>
</evidence>
<evidence type="ECO:0000269" key="2">
    <source>
    </source>
</evidence>
<evidence type="ECO:0007829" key="3">
    <source>
        <dbReference type="PDB" id="3FDQ"/>
    </source>
</evidence>
<evidence type="ECO:0007829" key="4">
    <source>
        <dbReference type="PDB" id="7X9S"/>
    </source>
</evidence>
<gene>
    <name type="primary">mogR</name>
    <name type="ordered locus">lmo0674</name>
</gene>
<organism>
    <name type="scientific">Listeria monocytogenes serovar 1/2a (strain ATCC BAA-679 / EGD-e)</name>
    <dbReference type="NCBI Taxonomy" id="169963"/>
    <lineage>
        <taxon>Bacteria</taxon>
        <taxon>Bacillati</taxon>
        <taxon>Bacillota</taxon>
        <taxon>Bacilli</taxon>
        <taxon>Bacillales</taxon>
        <taxon>Listeriaceae</taxon>
        <taxon>Listeria</taxon>
    </lineage>
</organism>